<accession>Q5HP20</accession>
<protein>
    <recommendedName>
        <fullName evidence="1">Elongation factor P</fullName>
        <shortName evidence="1">EF-P</shortName>
    </recommendedName>
</protein>
<proteinExistence type="inferred from homology"/>
<name>EFP_STAEQ</name>
<organism>
    <name type="scientific">Staphylococcus epidermidis (strain ATCC 35984 / DSM 28319 / BCRC 17069 / CCUG 31568 / BM 3577 / RP62A)</name>
    <dbReference type="NCBI Taxonomy" id="176279"/>
    <lineage>
        <taxon>Bacteria</taxon>
        <taxon>Bacillati</taxon>
        <taxon>Bacillota</taxon>
        <taxon>Bacilli</taxon>
        <taxon>Bacillales</taxon>
        <taxon>Staphylococcaceae</taxon>
        <taxon>Staphylococcus</taxon>
    </lineage>
</organism>
<reference key="1">
    <citation type="journal article" date="2005" name="J. Bacteriol.">
        <title>Insights on evolution of virulence and resistance from the complete genome analysis of an early methicillin-resistant Staphylococcus aureus strain and a biofilm-producing methicillin-resistant Staphylococcus epidermidis strain.</title>
        <authorList>
            <person name="Gill S.R."/>
            <person name="Fouts D.E."/>
            <person name="Archer G.L."/>
            <person name="Mongodin E.F."/>
            <person name="DeBoy R.T."/>
            <person name="Ravel J."/>
            <person name="Paulsen I.T."/>
            <person name="Kolonay J.F."/>
            <person name="Brinkac L.M."/>
            <person name="Beanan M.J."/>
            <person name="Dodson R.J."/>
            <person name="Daugherty S.C."/>
            <person name="Madupu R."/>
            <person name="Angiuoli S.V."/>
            <person name="Durkin A.S."/>
            <person name="Haft D.H."/>
            <person name="Vamathevan J.J."/>
            <person name="Khouri H."/>
            <person name="Utterback T.R."/>
            <person name="Lee C."/>
            <person name="Dimitrov G."/>
            <person name="Jiang L."/>
            <person name="Qin H."/>
            <person name="Weidman J."/>
            <person name="Tran K."/>
            <person name="Kang K.H."/>
            <person name="Hance I.R."/>
            <person name="Nelson K.E."/>
            <person name="Fraser C.M."/>
        </authorList>
    </citation>
    <scope>NUCLEOTIDE SEQUENCE [LARGE SCALE GENOMIC DNA]</scope>
    <source>
        <strain>ATCC 35984 / DSM 28319 / BCRC 17069 / CCUG 31568 / BM 3577 / RP62A</strain>
    </source>
</reference>
<feature type="chain" id="PRO_0000094335" description="Elongation factor P">
    <location>
        <begin position="1"/>
        <end position="185"/>
    </location>
</feature>
<sequence length="185" mass="20594">MISVNDFKTGLTISVDNGIWKVIDFQHVKPGKGSAFVRSKLRNLRTGAIQEKTFRAGEKVEQAMIENRRMQYLYADGDNHVFMDNETFDQIELPGDYLKDELNYLKANMEVQVQSYESEVIGVELPKTVELEVTETEPGIKGDTATGATKSATVETGYTLNVPLFVNEGDTLVINTSDGSYISRG</sequence>
<gene>
    <name evidence="1" type="primary">efp</name>
    <name type="ordered locus">SERP1093</name>
</gene>
<dbReference type="EMBL" id="CP000029">
    <property type="protein sequence ID" value="AAW54477.1"/>
    <property type="molecule type" value="Genomic_DNA"/>
</dbReference>
<dbReference type="RefSeq" id="WP_001831269.1">
    <property type="nucleotide sequence ID" value="NC_002976.3"/>
</dbReference>
<dbReference type="SMR" id="Q5HP20"/>
<dbReference type="STRING" id="176279.SERP1093"/>
<dbReference type="GeneID" id="50018669"/>
<dbReference type="KEGG" id="ser:SERP1093"/>
<dbReference type="eggNOG" id="COG0231">
    <property type="taxonomic scope" value="Bacteria"/>
</dbReference>
<dbReference type="HOGENOM" id="CLU_074944_0_1_9"/>
<dbReference type="UniPathway" id="UPA00345"/>
<dbReference type="Proteomes" id="UP000000531">
    <property type="component" value="Chromosome"/>
</dbReference>
<dbReference type="GO" id="GO:0005737">
    <property type="term" value="C:cytoplasm"/>
    <property type="evidence" value="ECO:0007669"/>
    <property type="project" value="UniProtKB-SubCell"/>
</dbReference>
<dbReference type="GO" id="GO:0003746">
    <property type="term" value="F:translation elongation factor activity"/>
    <property type="evidence" value="ECO:0007669"/>
    <property type="project" value="UniProtKB-UniRule"/>
</dbReference>
<dbReference type="GO" id="GO:0043043">
    <property type="term" value="P:peptide biosynthetic process"/>
    <property type="evidence" value="ECO:0007669"/>
    <property type="project" value="InterPro"/>
</dbReference>
<dbReference type="CDD" id="cd04470">
    <property type="entry name" value="S1_EF-P_repeat_1"/>
    <property type="match status" value="1"/>
</dbReference>
<dbReference type="CDD" id="cd05794">
    <property type="entry name" value="S1_EF-P_repeat_2"/>
    <property type="match status" value="1"/>
</dbReference>
<dbReference type="FunFam" id="2.30.30.30:FF:000010">
    <property type="entry name" value="Elongation factor P"/>
    <property type="match status" value="1"/>
</dbReference>
<dbReference type="FunFam" id="2.40.50.140:FF:000004">
    <property type="entry name" value="Elongation factor P"/>
    <property type="match status" value="1"/>
</dbReference>
<dbReference type="FunFam" id="2.40.50.140:FF:000009">
    <property type="entry name" value="Elongation factor P"/>
    <property type="match status" value="1"/>
</dbReference>
<dbReference type="Gene3D" id="2.30.30.30">
    <property type="match status" value="1"/>
</dbReference>
<dbReference type="Gene3D" id="2.40.50.140">
    <property type="entry name" value="Nucleic acid-binding proteins"/>
    <property type="match status" value="2"/>
</dbReference>
<dbReference type="HAMAP" id="MF_00141">
    <property type="entry name" value="EF_P"/>
    <property type="match status" value="1"/>
</dbReference>
<dbReference type="InterPro" id="IPR015365">
    <property type="entry name" value="Elong-fact-P_C"/>
</dbReference>
<dbReference type="InterPro" id="IPR012340">
    <property type="entry name" value="NA-bd_OB-fold"/>
</dbReference>
<dbReference type="InterPro" id="IPR014722">
    <property type="entry name" value="Rib_uL2_dom2"/>
</dbReference>
<dbReference type="InterPro" id="IPR020599">
    <property type="entry name" value="Transl_elong_fac_P/YeiP"/>
</dbReference>
<dbReference type="InterPro" id="IPR013185">
    <property type="entry name" value="Transl_elong_KOW-like"/>
</dbReference>
<dbReference type="InterPro" id="IPR001059">
    <property type="entry name" value="Transl_elong_P/YeiP_cen"/>
</dbReference>
<dbReference type="InterPro" id="IPR013852">
    <property type="entry name" value="Transl_elong_P/YeiP_CS"/>
</dbReference>
<dbReference type="InterPro" id="IPR011768">
    <property type="entry name" value="Transl_elongation_fac_P"/>
</dbReference>
<dbReference type="InterPro" id="IPR008991">
    <property type="entry name" value="Translation_prot_SH3-like_sf"/>
</dbReference>
<dbReference type="NCBIfam" id="TIGR00038">
    <property type="entry name" value="efp"/>
    <property type="match status" value="1"/>
</dbReference>
<dbReference type="NCBIfam" id="NF001810">
    <property type="entry name" value="PRK00529.1"/>
    <property type="match status" value="1"/>
</dbReference>
<dbReference type="PANTHER" id="PTHR30053">
    <property type="entry name" value="ELONGATION FACTOR P"/>
    <property type="match status" value="1"/>
</dbReference>
<dbReference type="PANTHER" id="PTHR30053:SF12">
    <property type="entry name" value="ELONGATION FACTOR P (EF-P) FAMILY PROTEIN"/>
    <property type="match status" value="1"/>
</dbReference>
<dbReference type="Pfam" id="PF01132">
    <property type="entry name" value="EFP"/>
    <property type="match status" value="1"/>
</dbReference>
<dbReference type="Pfam" id="PF08207">
    <property type="entry name" value="EFP_N"/>
    <property type="match status" value="1"/>
</dbReference>
<dbReference type="Pfam" id="PF09285">
    <property type="entry name" value="Elong-fact-P_C"/>
    <property type="match status" value="1"/>
</dbReference>
<dbReference type="PIRSF" id="PIRSF005901">
    <property type="entry name" value="EF-P"/>
    <property type="match status" value="1"/>
</dbReference>
<dbReference type="SMART" id="SM01185">
    <property type="entry name" value="EFP"/>
    <property type="match status" value="1"/>
</dbReference>
<dbReference type="SMART" id="SM00841">
    <property type="entry name" value="Elong-fact-P_C"/>
    <property type="match status" value="1"/>
</dbReference>
<dbReference type="SUPFAM" id="SSF50249">
    <property type="entry name" value="Nucleic acid-binding proteins"/>
    <property type="match status" value="2"/>
</dbReference>
<dbReference type="SUPFAM" id="SSF50104">
    <property type="entry name" value="Translation proteins SH3-like domain"/>
    <property type="match status" value="1"/>
</dbReference>
<dbReference type="PROSITE" id="PS01275">
    <property type="entry name" value="EFP"/>
    <property type="match status" value="1"/>
</dbReference>
<evidence type="ECO:0000255" key="1">
    <source>
        <dbReference type="HAMAP-Rule" id="MF_00141"/>
    </source>
</evidence>
<keyword id="KW-0963">Cytoplasm</keyword>
<keyword id="KW-0251">Elongation factor</keyword>
<keyword id="KW-0648">Protein biosynthesis</keyword>
<keyword id="KW-1185">Reference proteome</keyword>
<comment type="function">
    <text evidence="1">Involved in peptide bond synthesis. Stimulates efficient translation and peptide-bond synthesis on native or reconstituted 70S ribosomes in vitro. Probably functions indirectly by altering the affinity of the ribosome for aminoacyl-tRNA, thus increasing their reactivity as acceptors for peptidyl transferase.</text>
</comment>
<comment type="pathway">
    <text evidence="1">Protein biosynthesis; polypeptide chain elongation.</text>
</comment>
<comment type="subcellular location">
    <subcellularLocation>
        <location evidence="1">Cytoplasm</location>
    </subcellularLocation>
</comment>
<comment type="similarity">
    <text evidence="1">Belongs to the elongation factor P family.</text>
</comment>